<organism>
    <name type="scientific">Candida glabrata (strain ATCC 2001 / BCRC 20586 / JCM 3761 / NBRC 0622 / NRRL Y-65 / CBS 138)</name>
    <name type="common">Yeast</name>
    <name type="synonym">Nakaseomyces glabratus</name>
    <dbReference type="NCBI Taxonomy" id="284593"/>
    <lineage>
        <taxon>Eukaryota</taxon>
        <taxon>Fungi</taxon>
        <taxon>Dikarya</taxon>
        <taxon>Ascomycota</taxon>
        <taxon>Saccharomycotina</taxon>
        <taxon>Saccharomycetes</taxon>
        <taxon>Saccharomycetales</taxon>
        <taxon>Saccharomycetaceae</taxon>
        <taxon>Nakaseomyces</taxon>
    </lineage>
</organism>
<gene>
    <name type="primary">PEX22</name>
    <name type="ordered locus">CAGL0J07194g</name>
</gene>
<protein>
    <recommendedName>
        <fullName>Peroxisome assembly protein 22</fullName>
    </recommendedName>
    <alternativeName>
        <fullName>Peroxin-22</fullName>
    </alternativeName>
</protein>
<comment type="function">
    <text evidence="1">Involved in peroxisome biogenesis.</text>
</comment>
<comment type="subcellular location">
    <subcellularLocation>
        <location evidence="1">Peroxisome membrane</location>
        <topology evidence="1">Single-pass membrane protein</topology>
    </subcellularLocation>
</comment>
<comment type="similarity">
    <text evidence="3">Belongs to the peroxin-22 family.</text>
</comment>
<feature type="chain" id="PRO_0000058335" description="Peroxisome assembly protein 22">
    <location>
        <begin position="1"/>
        <end position="174"/>
    </location>
</feature>
<feature type="transmembrane region" description="Helical" evidence="2">
    <location>
        <begin position="9"/>
        <end position="27"/>
    </location>
</feature>
<reference key="1">
    <citation type="journal article" date="2004" name="Nature">
        <title>Genome evolution in yeasts.</title>
        <authorList>
            <person name="Dujon B."/>
            <person name="Sherman D."/>
            <person name="Fischer G."/>
            <person name="Durrens P."/>
            <person name="Casaregola S."/>
            <person name="Lafontaine I."/>
            <person name="de Montigny J."/>
            <person name="Marck C."/>
            <person name="Neuveglise C."/>
            <person name="Talla E."/>
            <person name="Goffard N."/>
            <person name="Frangeul L."/>
            <person name="Aigle M."/>
            <person name="Anthouard V."/>
            <person name="Babour A."/>
            <person name="Barbe V."/>
            <person name="Barnay S."/>
            <person name="Blanchin S."/>
            <person name="Beckerich J.-M."/>
            <person name="Beyne E."/>
            <person name="Bleykasten C."/>
            <person name="Boisrame A."/>
            <person name="Boyer J."/>
            <person name="Cattolico L."/>
            <person name="Confanioleri F."/>
            <person name="de Daruvar A."/>
            <person name="Despons L."/>
            <person name="Fabre E."/>
            <person name="Fairhead C."/>
            <person name="Ferry-Dumazet H."/>
            <person name="Groppi A."/>
            <person name="Hantraye F."/>
            <person name="Hennequin C."/>
            <person name="Jauniaux N."/>
            <person name="Joyet P."/>
            <person name="Kachouri R."/>
            <person name="Kerrest A."/>
            <person name="Koszul R."/>
            <person name="Lemaire M."/>
            <person name="Lesur I."/>
            <person name="Ma L."/>
            <person name="Muller H."/>
            <person name="Nicaud J.-M."/>
            <person name="Nikolski M."/>
            <person name="Oztas S."/>
            <person name="Ozier-Kalogeropoulos O."/>
            <person name="Pellenz S."/>
            <person name="Potier S."/>
            <person name="Richard G.-F."/>
            <person name="Straub M.-L."/>
            <person name="Suleau A."/>
            <person name="Swennen D."/>
            <person name="Tekaia F."/>
            <person name="Wesolowski-Louvel M."/>
            <person name="Westhof E."/>
            <person name="Wirth B."/>
            <person name="Zeniou-Meyer M."/>
            <person name="Zivanovic Y."/>
            <person name="Bolotin-Fukuhara M."/>
            <person name="Thierry A."/>
            <person name="Bouchier C."/>
            <person name="Caudron B."/>
            <person name="Scarpelli C."/>
            <person name="Gaillardin C."/>
            <person name="Weissenbach J."/>
            <person name="Wincker P."/>
            <person name="Souciet J.-L."/>
        </authorList>
    </citation>
    <scope>NUCLEOTIDE SEQUENCE [LARGE SCALE GENOMIC DNA]</scope>
    <source>
        <strain>ATCC 2001 / BCRC 20586 / JCM 3761 / NBRC 0622 / NRRL Y-65 / CBS 138</strain>
    </source>
</reference>
<dbReference type="EMBL" id="CR380956">
    <property type="protein sequence ID" value="CAG60970.1"/>
    <property type="molecule type" value="Genomic_DNA"/>
</dbReference>
<dbReference type="RefSeq" id="XP_448019.1">
    <property type="nucleotide sequence ID" value="XM_448019.1"/>
</dbReference>
<dbReference type="SMR" id="Q6FP25"/>
<dbReference type="FunCoup" id="Q6FP25">
    <property type="interactions" value="28"/>
</dbReference>
<dbReference type="EnsemblFungi" id="CAGL0J07194g-T">
    <property type="protein sequence ID" value="CAGL0J07194g-T-p1"/>
    <property type="gene ID" value="CAGL0J07194g"/>
</dbReference>
<dbReference type="GeneID" id="2889573"/>
<dbReference type="KEGG" id="cgr:2889573"/>
<dbReference type="CGD" id="CAL0133414">
    <property type="gene designation" value="PEX22"/>
</dbReference>
<dbReference type="VEuPathDB" id="FungiDB:CAGL0J07194g"/>
<dbReference type="eggNOG" id="ENOG502S5ME">
    <property type="taxonomic scope" value="Eukaryota"/>
</dbReference>
<dbReference type="HOGENOM" id="CLU_121063_0_0_1"/>
<dbReference type="InParanoid" id="Q6FP25"/>
<dbReference type="OMA" id="GMWACVK"/>
<dbReference type="Proteomes" id="UP000002428">
    <property type="component" value="Chromosome J"/>
</dbReference>
<dbReference type="GO" id="GO:0005778">
    <property type="term" value="C:peroxisomal membrane"/>
    <property type="evidence" value="ECO:0007669"/>
    <property type="project" value="UniProtKB-SubCell"/>
</dbReference>
<dbReference type="GO" id="GO:0016562">
    <property type="term" value="P:protein import into peroxisome matrix, receptor recycling"/>
    <property type="evidence" value="ECO:0000266"/>
    <property type="project" value="CGD"/>
</dbReference>
<dbReference type="Gene3D" id="3.40.50.11730">
    <property type="entry name" value="Peroxisome assembly protein 22"/>
    <property type="match status" value="1"/>
</dbReference>
<dbReference type="InterPro" id="IPR024359">
    <property type="entry name" value="Peroxin-22"/>
</dbReference>
<dbReference type="InterPro" id="IPR038613">
    <property type="entry name" value="Peroxin-22_C_sf"/>
</dbReference>
<dbReference type="Pfam" id="PF12827">
    <property type="entry name" value="Peroxin-22"/>
    <property type="match status" value="1"/>
</dbReference>
<proteinExistence type="inferred from homology"/>
<accession>Q6FP25</accession>
<name>PEX22_CANGA</name>
<evidence type="ECO:0000250" key="1"/>
<evidence type="ECO:0000255" key="2"/>
<evidence type="ECO:0000305" key="3"/>
<sequence length="174" mass="19882">MSKRRKNQGYLAIIAAVSIGAAAYLWWRNHSEDDSVSKFNQQDDGTAQDNQIKEKPAIKLGKKRLHRSLCVIISNKLSNLVELDWDEILQEDIVFLILPSVNDFQNSNDIKTDTHKIINCDTELGLWACVRTLKKNELLVCADDIKVPDDIGRYCDKISQIKSSQQLMNYLDET</sequence>
<keyword id="KW-0472">Membrane</keyword>
<keyword id="KW-0576">Peroxisome</keyword>
<keyword id="KW-0962">Peroxisome biogenesis</keyword>
<keyword id="KW-1185">Reference proteome</keyword>
<keyword id="KW-0812">Transmembrane</keyword>
<keyword id="KW-1133">Transmembrane helix</keyword>